<dbReference type="EMBL" id="CH471278">
    <property type="protein sequence ID" value="EAW61222.1"/>
    <property type="molecule type" value="Genomic_DNA"/>
</dbReference>
<dbReference type="EMBL" id="BC150562">
    <property type="protein sequence ID" value="AAI50563.1"/>
    <property type="molecule type" value="mRNA"/>
</dbReference>
<dbReference type="EMBL" id="BC150563">
    <property type="protein sequence ID" value="AAI50564.1"/>
    <property type="molecule type" value="mRNA"/>
</dbReference>
<dbReference type="CCDS" id="CCDS31323.1"/>
<dbReference type="RefSeq" id="NP_001020466.1">
    <property type="nucleotide sequence ID" value="NM_001025295.3"/>
</dbReference>
<dbReference type="SMR" id="A6NNB3"/>
<dbReference type="BioGRID" id="132416">
    <property type="interactions" value="10"/>
</dbReference>
<dbReference type="FunCoup" id="A6NNB3">
    <property type="interactions" value="182"/>
</dbReference>
<dbReference type="IntAct" id="A6NNB3">
    <property type="interactions" value="5"/>
</dbReference>
<dbReference type="STRING" id="9606.ENSP00000372059"/>
<dbReference type="GlyGen" id="A6NNB3">
    <property type="glycosylation" value="1 site"/>
</dbReference>
<dbReference type="iPTMnet" id="A6NNB3"/>
<dbReference type="PhosphoSitePlus" id="A6NNB3"/>
<dbReference type="SwissPalm" id="A6NNB3"/>
<dbReference type="BioMuta" id="IFITM5"/>
<dbReference type="MassIVE" id="A6NNB3"/>
<dbReference type="PaxDb" id="9606-ENSP00000372059"/>
<dbReference type="PeptideAtlas" id="A6NNB3"/>
<dbReference type="ProteomicsDB" id="1596"/>
<dbReference type="Antibodypedia" id="41962">
    <property type="antibodies" value="116 antibodies from 19 providers"/>
</dbReference>
<dbReference type="DNASU" id="387733"/>
<dbReference type="Ensembl" id="ENST00000382614.2">
    <property type="protein sequence ID" value="ENSP00000372059.2"/>
    <property type="gene ID" value="ENSG00000206013.2"/>
</dbReference>
<dbReference type="GeneID" id="387733"/>
<dbReference type="KEGG" id="hsa:387733"/>
<dbReference type="MANE-Select" id="ENST00000382614.2">
    <property type="protein sequence ID" value="ENSP00000372059.2"/>
    <property type="RefSeq nucleotide sequence ID" value="NM_001025295.3"/>
    <property type="RefSeq protein sequence ID" value="NP_001020466.1"/>
</dbReference>
<dbReference type="UCSC" id="uc001low.3">
    <property type="organism name" value="human"/>
</dbReference>
<dbReference type="AGR" id="HGNC:16644"/>
<dbReference type="CTD" id="387733"/>
<dbReference type="DisGeNET" id="387733"/>
<dbReference type="GeneCards" id="IFITM5"/>
<dbReference type="HGNC" id="HGNC:16644">
    <property type="gene designation" value="IFITM5"/>
</dbReference>
<dbReference type="HPA" id="ENSG00000206013">
    <property type="expression patterns" value="Tissue enriched (pancreas)"/>
</dbReference>
<dbReference type="MalaCards" id="IFITM5"/>
<dbReference type="MIM" id="610967">
    <property type="type" value="phenotype"/>
</dbReference>
<dbReference type="MIM" id="614757">
    <property type="type" value="gene"/>
</dbReference>
<dbReference type="neXtProt" id="NX_A6NNB3"/>
<dbReference type="OpenTargets" id="ENSG00000206013"/>
<dbReference type="Orphanet" id="216828">
    <property type="disease" value="Osteogenesis imperfecta type 5"/>
</dbReference>
<dbReference type="PharmGKB" id="PA162391894"/>
<dbReference type="VEuPathDB" id="HostDB:ENSG00000206013"/>
<dbReference type="eggNOG" id="ENOG502RXZM">
    <property type="taxonomic scope" value="Eukaryota"/>
</dbReference>
<dbReference type="GeneTree" id="ENSGT00950000182857"/>
<dbReference type="HOGENOM" id="CLU_124511_2_0_1"/>
<dbReference type="InParanoid" id="A6NNB3"/>
<dbReference type="OMA" id="SYPREDY"/>
<dbReference type="OrthoDB" id="9882660at2759"/>
<dbReference type="PAN-GO" id="A6NNB3">
    <property type="GO annotations" value="3 GO annotations based on evolutionary models"/>
</dbReference>
<dbReference type="PhylomeDB" id="A6NNB3"/>
<dbReference type="TreeFam" id="TF334894"/>
<dbReference type="PathwayCommons" id="A6NNB3"/>
<dbReference type="SignaLink" id="A6NNB3"/>
<dbReference type="SIGNOR" id="A6NNB3"/>
<dbReference type="BioGRID-ORCS" id="387733">
    <property type="hits" value="9 hits in 1138 CRISPR screens"/>
</dbReference>
<dbReference type="GenomeRNAi" id="387733"/>
<dbReference type="Pharos" id="A6NNB3">
    <property type="development level" value="Tbio"/>
</dbReference>
<dbReference type="PRO" id="PR:A6NNB3"/>
<dbReference type="Proteomes" id="UP000005640">
    <property type="component" value="Chromosome 11"/>
</dbReference>
<dbReference type="RNAct" id="A6NNB3">
    <property type="molecule type" value="protein"/>
</dbReference>
<dbReference type="Bgee" id="ENSG00000206013">
    <property type="expression patterns" value="Expressed in body of pancreas and 62 other cell types or tissues"/>
</dbReference>
<dbReference type="GO" id="GO:0005829">
    <property type="term" value="C:cytosol"/>
    <property type="evidence" value="ECO:0000314"/>
    <property type="project" value="HPA"/>
</dbReference>
<dbReference type="GO" id="GO:0043231">
    <property type="term" value="C:intracellular membrane-bounded organelle"/>
    <property type="evidence" value="ECO:0000314"/>
    <property type="project" value="HPA"/>
</dbReference>
<dbReference type="GO" id="GO:0005886">
    <property type="term" value="C:plasma membrane"/>
    <property type="evidence" value="ECO:0000314"/>
    <property type="project" value="UniProtKB"/>
</dbReference>
<dbReference type="GO" id="GO:0030282">
    <property type="term" value="P:bone mineralization"/>
    <property type="evidence" value="ECO:0000315"/>
    <property type="project" value="UniProtKB"/>
</dbReference>
<dbReference type="GO" id="GO:0060349">
    <property type="term" value="P:bone morphogenesis"/>
    <property type="evidence" value="ECO:0000315"/>
    <property type="project" value="UniProtKB"/>
</dbReference>
<dbReference type="GO" id="GO:0001701">
    <property type="term" value="P:in utero embryonic development"/>
    <property type="evidence" value="ECO:0007669"/>
    <property type="project" value="Ensembl"/>
</dbReference>
<dbReference type="GO" id="GO:0030500">
    <property type="term" value="P:regulation of bone mineralization"/>
    <property type="evidence" value="ECO:0007669"/>
    <property type="project" value="UniProtKB-KW"/>
</dbReference>
<dbReference type="GO" id="GO:1901355">
    <property type="term" value="P:response to rapamycin"/>
    <property type="evidence" value="ECO:0007669"/>
    <property type="project" value="Ensembl"/>
</dbReference>
<dbReference type="GO" id="GO:1901327">
    <property type="term" value="P:response to tacrolimus"/>
    <property type="evidence" value="ECO:0007669"/>
    <property type="project" value="Ensembl"/>
</dbReference>
<dbReference type="InterPro" id="IPR007593">
    <property type="entry name" value="CD225/Dispanin_fam"/>
</dbReference>
<dbReference type="InterPro" id="IPR051517">
    <property type="entry name" value="IFITM_antiviral_protein"/>
</dbReference>
<dbReference type="PANTHER" id="PTHR13999">
    <property type="entry name" value="INTERFERON INDUCIBLE TRANSMEMBRANE PROTEIN"/>
    <property type="match status" value="1"/>
</dbReference>
<dbReference type="PANTHER" id="PTHR13999:SF10">
    <property type="entry name" value="INTERFERON-INDUCED TRANSMEMBRANE PROTEIN 5"/>
    <property type="match status" value="1"/>
</dbReference>
<dbReference type="Pfam" id="PF04505">
    <property type="entry name" value="CD225"/>
    <property type="match status" value="1"/>
</dbReference>
<keyword id="KW-1003">Cell membrane</keyword>
<keyword id="KW-0217">Developmental protein</keyword>
<keyword id="KW-0225">Disease variant</keyword>
<keyword id="KW-0449">Lipoprotein</keyword>
<keyword id="KW-0472">Membrane</keyword>
<keyword id="KW-0495">Mineral balance</keyword>
<keyword id="KW-1065">Osteogenesis imperfecta</keyword>
<keyword id="KW-0564">Palmitate</keyword>
<keyword id="KW-1185">Reference proteome</keyword>
<keyword id="KW-0812">Transmembrane</keyword>
<keyword id="KW-1133">Transmembrane helix</keyword>
<organism>
    <name type="scientific">Homo sapiens</name>
    <name type="common">Human</name>
    <dbReference type="NCBI Taxonomy" id="9606"/>
    <lineage>
        <taxon>Eukaryota</taxon>
        <taxon>Metazoa</taxon>
        <taxon>Chordata</taxon>
        <taxon>Craniata</taxon>
        <taxon>Vertebrata</taxon>
        <taxon>Euteleostomi</taxon>
        <taxon>Mammalia</taxon>
        <taxon>Eutheria</taxon>
        <taxon>Euarchontoglires</taxon>
        <taxon>Primates</taxon>
        <taxon>Haplorrhini</taxon>
        <taxon>Catarrhini</taxon>
        <taxon>Hominidae</taxon>
        <taxon>Homo</taxon>
    </lineage>
</organism>
<feature type="chain" id="PRO_0000305103" description="Interferon-induced transmembrane protein 5">
    <location>
        <begin position="1"/>
        <end position="132"/>
    </location>
</feature>
<feature type="topological domain" description="Extracellular" evidence="2">
    <location>
        <begin position="1"/>
        <end position="36"/>
    </location>
</feature>
<feature type="transmembrane region" description="Helical" evidence="2">
    <location>
        <begin position="37"/>
        <end position="57"/>
    </location>
</feature>
<feature type="topological domain" description="Cytoplasmic" evidence="2">
    <location>
        <begin position="58"/>
        <end position="86"/>
    </location>
</feature>
<feature type="transmembrane region" description="Helical" evidence="2">
    <location>
        <begin position="87"/>
        <end position="107"/>
    </location>
</feature>
<feature type="topological domain" description="Extracellular" evidence="1 2">
    <location>
        <begin position="108"/>
        <end position="132"/>
    </location>
</feature>
<feature type="region of interest" description="Disordered" evidence="3">
    <location>
        <begin position="1"/>
        <end position="21"/>
    </location>
</feature>
<feature type="compositionally biased region" description="Basic and acidic residues" evidence="3">
    <location>
        <begin position="1"/>
        <end position="11"/>
    </location>
</feature>
<feature type="lipid moiety-binding region" description="S-palmitoyl cysteine" evidence="1">
    <location>
        <position position="50"/>
    </location>
</feature>
<feature type="lipid moiety-binding region" description="S-palmitoyl cysteine" evidence="1">
    <location>
        <position position="51"/>
    </location>
</feature>
<feature type="lipid moiety-binding region" description="S-palmitoyl cysteine" evidence="1">
    <location>
        <position position="84"/>
    </location>
</feature>
<feature type="sequence variant" id="VAR_062170" description="In dbSNP:rs57285449.">
    <original>G</original>
    <variation>A</variation>
    <location>
        <position position="27"/>
    </location>
</feature>
<feature type="sequence variant" id="VAR_071889" description="In OI5; correlates with reduced expression and barely detectable secretion of SERPINF1; dbSNP:rs786201032." evidence="6">
    <original>S</original>
    <variation>L</variation>
    <location>
        <position position="40"/>
    </location>
</feature>
<sequence length="132" mass="14378">MDTAYPREDTRAPTPSKAGAHTALTLGAPHPPPRDHLIWSVFSTLYLNLCCLGFLALAYSIKARDQKVVGDLEAARRFGSKAKCYNILAAMWTLVPPLLLLGLVVTGALHLARLAKDSAAFFSTKFDDADYD</sequence>
<gene>
    <name type="primary">IFITM5</name>
</gene>
<evidence type="ECO:0000250" key="1">
    <source>
        <dbReference type="UniProtKB" id="O88728"/>
    </source>
</evidence>
<evidence type="ECO:0000255" key="2"/>
<evidence type="ECO:0000256" key="3">
    <source>
        <dbReference type="SAM" id="MobiDB-lite"/>
    </source>
</evidence>
<evidence type="ECO:0000269" key="4">
    <source>
    </source>
</evidence>
<evidence type="ECO:0000269" key="5">
    <source>
    </source>
</evidence>
<evidence type="ECO:0000269" key="6">
    <source>
    </source>
</evidence>
<evidence type="ECO:0000305" key="7"/>
<protein>
    <recommendedName>
        <fullName>Interferon-induced transmembrane protein 5</fullName>
    </recommendedName>
    <alternativeName>
        <fullName>Bone-restricted interferon-induced transmembrane protein-like protein</fullName>
        <shortName>BRIL</shortName>
    </alternativeName>
    <alternativeName>
        <fullName>Dispanin subfamily A member 1</fullName>
        <shortName>DSPA1</shortName>
    </alternativeName>
</protein>
<accession>A6NNB3</accession>
<comment type="function">
    <text evidence="6">Required for normal bone mineralization.</text>
</comment>
<comment type="subunit">
    <text evidence="1">Interacts with FKBP11.</text>
</comment>
<comment type="subcellular location">
    <subcellularLocation>
        <location evidence="6">Cell membrane</location>
        <topology evidence="2">Multi-pass membrane protein</topology>
    </subcellularLocation>
</comment>
<comment type="tissue specificity">
    <text evidence="5 6">Detected in osteoblasts and fibroblasts (at protein level) (PubMed:24519609). Detected in bone (PubMed:24058703).</text>
</comment>
<comment type="PTM">
    <text evidence="1">Palmitoylated.</text>
</comment>
<comment type="disease" evidence="4 6">
    <disease id="DI-03563">
        <name>Osteogenesis imperfecta 5</name>
        <acronym>OI5</acronym>
        <description>An autosomal dominant form of osteogenesis imperfecta, a disorder of bone formation characterized by low bone mass, bone fragility and susceptibility to fractures after minimal trauma. Disease severity ranges from very mild forms without fractures to intrauterine fractures and perinatal lethality. Extraskeletal manifestations, which affect a variable number of patients, are dentinogenesis imperfecta, hearing loss, and blue sclerae. OI5 patients manifest moderate to severe bone fragility, calcification of the forearm interosseous membrane, radial head dislocation, a subphyseal metaphyseal radiodense line, and hyperplastic callus formation.</description>
        <dbReference type="MIM" id="610967"/>
    </disease>
    <text>The disease is caused by variants affecting the gene represented in this entry.</text>
</comment>
<comment type="similarity">
    <text evidence="7">Belongs to the CD225/Dispanin family.</text>
</comment>
<name>IFM5_HUMAN</name>
<reference key="1">
    <citation type="submission" date="2005-07" db="EMBL/GenBank/DDBJ databases">
        <authorList>
            <person name="Mural R.J."/>
            <person name="Istrail S."/>
            <person name="Sutton G.G."/>
            <person name="Florea L."/>
            <person name="Halpern A.L."/>
            <person name="Mobarry C.M."/>
            <person name="Lippert R."/>
            <person name="Walenz B."/>
            <person name="Shatkay H."/>
            <person name="Dew I."/>
            <person name="Miller J.R."/>
            <person name="Flanigan M.J."/>
            <person name="Edwards N.J."/>
            <person name="Bolanos R."/>
            <person name="Fasulo D."/>
            <person name="Halldorsson B.V."/>
            <person name="Hannenhalli S."/>
            <person name="Turner R."/>
            <person name="Yooseph S."/>
            <person name="Lu F."/>
            <person name="Nusskern D.R."/>
            <person name="Shue B.C."/>
            <person name="Zheng X.H."/>
            <person name="Zhong F."/>
            <person name="Delcher A.L."/>
            <person name="Huson D.H."/>
            <person name="Kravitz S.A."/>
            <person name="Mouchard L."/>
            <person name="Reinert K."/>
            <person name="Remington K.A."/>
            <person name="Clark A.G."/>
            <person name="Waterman M.S."/>
            <person name="Eichler E.E."/>
            <person name="Adams M.D."/>
            <person name="Hunkapiller M.W."/>
            <person name="Myers E.W."/>
            <person name="Venter J.C."/>
        </authorList>
    </citation>
    <scope>NUCLEOTIDE SEQUENCE [LARGE SCALE GENOMIC DNA]</scope>
</reference>
<reference key="2">
    <citation type="journal article" date="2004" name="Genome Res.">
        <title>The status, quality, and expansion of the NIH full-length cDNA project: the Mammalian Gene Collection (MGC).</title>
        <authorList>
            <consortium name="The MGC Project Team"/>
        </authorList>
    </citation>
    <scope>NUCLEOTIDE SEQUENCE [LARGE SCALE MRNA]</scope>
</reference>
<reference key="3">
    <citation type="journal article" date="2012" name="Am. J. Hum. Genet.">
        <title>A single recurrent mutation in the 5'-UTR of IFITM5 causes osteogenesis imperfecta type V.</title>
        <authorList>
            <person name="Cho T.J."/>
            <person name="Lee K.E."/>
            <person name="Lee S.K."/>
            <person name="Song S.J."/>
            <person name="Kim K.J."/>
            <person name="Jeon D."/>
            <person name="Lee G."/>
            <person name="Kim H.N."/>
            <person name="Lee H.R."/>
            <person name="Eom H.H."/>
            <person name="Lee Z.H."/>
            <person name="Kim O.H."/>
            <person name="Park W.Y."/>
            <person name="Park S.S."/>
            <person name="Ikegawa S."/>
            <person name="Yoo W.J."/>
            <person name="Choi I.H."/>
            <person name="Kim J.W."/>
        </authorList>
    </citation>
    <scope>INVOLVEMENT IN OI5</scope>
</reference>
<reference key="4">
    <citation type="journal article" date="2012" name="PLoS ONE">
        <title>The dispanins: a novel gene family of ancient origin that contains 14 human members.</title>
        <authorList>
            <person name="Sallman Almen M."/>
            <person name="Bringeland N."/>
            <person name="Fredriksson R."/>
            <person name="Schioth H.B."/>
        </authorList>
    </citation>
    <scope>GENE FAMILY</scope>
</reference>
<reference key="5">
    <citation type="journal article" date="2013" name="PLoS ONE">
        <title>Role of S-palmitoylation on IFITM5 for the interaction with FKBP11 in osteoblast cells.</title>
        <authorList>
            <person name="Tsukamoto T."/>
            <person name="Li X."/>
            <person name="Morita H."/>
            <person name="Minowa T."/>
            <person name="Aizawa T."/>
            <person name="Hanagata N."/>
            <person name="Demura M."/>
        </authorList>
    </citation>
    <scope>TISSUE SPECIFICITY</scope>
</reference>
<reference key="6">
    <citation type="journal article" date="2014" name="J. Bone Miner. Res.">
        <title>A novel IFITM5 mutation in severe atypical osteogenesis imperfecta type VI impairs osteoblast production of pigment epithelium-derived factor.</title>
        <authorList>
            <person name="Farber C.R."/>
            <person name="Reich A."/>
            <person name="Barnes A.M."/>
            <person name="Becerra P."/>
            <person name="Rauch F."/>
            <person name="Cabral W.A."/>
            <person name="Bae A."/>
            <person name="Quinlan A."/>
            <person name="Glorieux F.H."/>
            <person name="Clemens T.L."/>
            <person name="Marini J.C."/>
        </authorList>
    </citation>
    <scope>VARIANT OI5 LEU-40</scope>
    <scope>TISSUE SPECIFICITY</scope>
    <scope>SUBCELLULAR LOCATION</scope>
    <scope>FUNCTION</scope>
</reference>
<proteinExistence type="evidence at protein level"/>